<organism>
    <name type="scientific">Paenarthrobacter aurescens (strain TC1)</name>
    <dbReference type="NCBI Taxonomy" id="290340"/>
    <lineage>
        <taxon>Bacteria</taxon>
        <taxon>Bacillati</taxon>
        <taxon>Actinomycetota</taxon>
        <taxon>Actinomycetes</taxon>
        <taxon>Micrococcales</taxon>
        <taxon>Micrococcaceae</taxon>
        <taxon>Paenarthrobacter</taxon>
    </lineage>
</organism>
<evidence type="ECO:0000255" key="1">
    <source>
        <dbReference type="HAMAP-Rule" id="MF_01297"/>
    </source>
</evidence>
<keyword id="KW-0349">Heme</keyword>
<keyword id="KW-0408">Iron</keyword>
<keyword id="KW-0413">Isomerase</keyword>
<keyword id="KW-0479">Metal-binding</keyword>
<proteinExistence type="inferred from homology"/>
<dbReference type="EC" id="5.99.-.-" evidence="1"/>
<dbReference type="EMBL" id="CP000474">
    <property type="protein sequence ID" value="ABM09399.1"/>
    <property type="molecule type" value="Genomic_DNA"/>
</dbReference>
<dbReference type="RefSeq" id="WP_011775625.1">
    <property type="nucleotide sequence ID" value="NC_008711.1"/>
</dbReference>
<dbReference type="SMR" id="A1R8X8"/>
<dbReference type="STRING" id="290340.AAur_2983"/>
<dbReference type="KEGG" id="aau:AAur_2983"/>
<dbReference type="eggNOG" id="COG3485">
    <property type="taxonomic scope" value="Bacteria"/>
</dbReference>
<dbReference type="HOGENOM" id="CLU_085483_0_1_11"/>
<dbReference type="OrthoDB" id="4804006at2"/>
<dbReference type="Proteomes" id="UP000000637">
    <property type="component" value="Chromosome"/>
</dbReference>
<dbReference type="GO" id="GO:0020037">
    <property type="term" value="F:heme binding"/>
    <property type="evidence" value="ECO:0007669"/>
    <property type="project" value="UniProtKB-UniRule"/>
</dbReference>
<dbReference type="GO" id="GO:0046872">
    <property type="term" value="F:metal ion binding"/>
    <property type="evidence" value="ECO:0007669"/>
    <property type="project" value="UniProtKB-KW"/>
</dbReference>
<dbReference type="GO" id="GO:0062213">
    <property type="term" value="F:peroxynitrite isomerase activity"/>
    <property type="evidence" value="ECO:0007669"/>
    <property type="project" value="UniProtKB-UniRule"/>
</dbReference>
<dbReference type="CDD" id="cd07828">
    <property type="entry name" value="lipocalin_heme-bd-THAP4-like"/>
    <property type="match status" value="1"/>
</dbReference>
<dbReference type="Gene3D" id="2.40.128.20">
    <property type="match status" value="1"/>
</dbReference>
<dbReference type="HAMAP" id="MF_01297">
    <property type="entry name" value="nitrobindin"/>
    <property type="match status" value="1"/>
</dbReference>
<dbReference type="InterPro" id="IPR012674">
    <property type="entry name" value="Calycin"/>
</dbReference>
<dbReference type="InterPro" id="IPR022939">
    <property type="entry name" value="Nb(III)_bact/plant"/>
</dbReference>
<dbReference type="InterPro" id="IPR045165">
    <property type="entry name" value="Nitrobindin"/>
</dbReference>
<dbReference type="InterPro" id="IPR014878">
    <property type="entry name" value="THAP4-like_heme-bd"/>
</dbReference>
<dbReference type="PANTHER" id="PTHR15854:SF4">
    <property type="entry name" value="PEROXYNITRITE ISOMERASE THAP4"/>
    <property type="match status" value="1"/>
</dbReference>
<dbReference type="PANTHER" id="PTHR15854">
    <property type="entry name" value="THAP4 PROTEIN"/>
    <property type="match status" value="1"/>
</dbReference>
<dbReference type="Pfam" id="PF08768">
    <property type="entry name" value="THAP4_heme-bd"/>
    <property type="match status" value="1"/>
</dbReference>
<dbReference type="SUPFAM" id="SSF50814">
    <property type="entry name" value="Lipocalins"/>
    <property type="match status" value="1"/>
</dbReference>
<comment type="function">
    <text evidence="1">Heme-binding protein able to scavenge peroxynitrite and to protect free L-tyrosine against peroxynitrite-mediated nitration, by acting as a peroxynitrite isomerase that converts peroxynitrite to nitrate. Therefore, this protein likely plays a role in peroxynitrite sensing and in the detoxification of reactive nitrogen and oxygen species (RNS and ROS, respectively). Is able to bind nitric oxide (NO) in vitro, but may act as a sensor of peroxynitrite levels in vivo.</text>
</comment>
<comment type="catalytic activity">
    <reaction evidence="1">
        <text>peroxynitrite = nitrate</text>
        <dbReference type="Rhea" id="RHEA:63116"/>
        <dbReference type="ChEBI" id="CHEBI:17632"/>
        <dbReference type="ChEBI" id="CHEBI:25941"/>
    </reaction>
    <physiologicalReaction direction="left-to-right" evidence="1">
        <dbReference type="Rhea" id="RHEA:63117"/>
    </physiologicalReaction>
</comment>
<comment type="cofactor">
    <cofactor evidence="1">
        <name>heme b</name>
        <dbReference type="ChEBI" id="CHEBI:60344"/>
    </cofactor>
    <text evidence="1">Binds 1 heme b group per subunit, that coordinates a highly solvent-exposed Fe(III) atom.</text>
</comment>
<comment type="pathway">
    <text evidence="1">Nitrogen metabolism.</text>
</comment>
<comment type="subunit">
    <text evidence="1">Homodimer.</text>
</comment>
<comment type="domain">
    <text evidence="1">Forms a 10-stranded antiparallel beta-barrel structure able to accommodate a hydrophobic ligand in its interior. In fact, this fold hosts the heme group, which is located in a wide surface cleft.</text>
</comment>
<comment type="similarity">
    <text evidence="1">Belongs to the nitrobindin family.</text>
</comment>
<name>NB_PAEAT</name>
<accession>A1R8X8</accession>
<protein>
    <recommendedName>
        <fullName>Peroxynitrite isomerase</fullName>
        <ecNumber evidence="1">5.99.-.-</ecNumber>
    </recommendedName>
    <alternativeName>
        <fullName>Ferric nitrobindin</fullName>
        <shortName>Nb(III)</shortName>
    </alternativeName>
</protein>
<feature type="chain" id="PRO_0000356895" description="Peroxynitrite isomerase">
    <location>
        <begin position="1"/>
        <end position="199"/>
    </location>
</feature>
<feature type="short sequence motif" description="GXWXGXG" evidence="1">
    <location>
        <begin position="21"/>
        <end position="27"/>
    </location>
</feature>
<feature type="binding site" description="axial binding residue" evidence="1">
    <location>
        <position position="190"/>
    </location>
    <ligand>
        <name>heme b</name>
        <dbReference type="ChEBI" id="CHEBI:60344"/>
    </ligand>
    <ligandPart>
        <name>Fe</name>
        <dbReference type="ChEBI" id="CHEBI:18248"/>
    </ligandPart>
</feature>
<gene>
    <name type="ordered locus">AAur_2983</name>
</gene>
<sequence>MPIEIPTDLTPELVPLSWLIGEWEGRGRLGSGDEDSEHFVQRVSFTHNGLPYLQYRAETWLSDDAGEKLRPLTVETGFWALERKLEEGDGGPGLIPADIVPVLKTADEVEERRNKEGGFDISVSIAHPGGITELYYGQIKGPQIQLSTDMVMRGSHSKEYTAATRIFGLVDGNLLWRWDVAASGKALEAHASAFLHKVS</sequence>
<reference key="1">
    <citation type="journal article" date="2006" name="PLoS Genet.">
        <title>Secrets of soil survival revealed by the genome sequence of Arthrobacter aurescens TC1.</title>
        <authorList>
            <person name="Mongodin E.F."/>
            <person name="Shapir N."/>
            <person name="Daugherty S.C."/>
            <person name="DeBoy R.T."/>
            <person name="Emerson J.B."/>
            <person name="Shvartzbeyn A."/>
            <person name="Radune D."/>
            <person name="Vamathevan J."/>
            <person name="Riggs F."/>
            <person name="Grinberg V."/>
            <person name="Khouri H.M."/>
            <person name="Wackett L.P."/>
            <person name="Nelson K.E."/>
            <person name="Sadowsky M.J."/>
        </authorList>
    </citation>
    <scope>NUCLEOTIDE SEQUENCE [LARGE SCALE GENOMIC DNA]</scope>
    <source>
        <strain>TC1</strain>
    </source>
</reference>